<gene>
    <name evidence="1" type="primary">grpE</name>
    <name type="ordered locus">CCA_00242</name>
</gene>
<reference key="1">
    <citation type="journal article" date="2003" name="Nucleic Acids Res.">
        <title>Genome sequence of Chlamydophila caviae (Chlamydia psittaci GPIC): examining the role of niche-specific genes in the evolution of the Chlamydiaceae.</title>
        <authorList>
            <person name="Read T.D."/>
            <person name="Myers G.S.A."/>
            <person name="Brunham R.C."/>
            <person name="Nelson W.C."/>
            <person name="Paulsen I.T."/>
            <person name="Heidelberg J.F."/>
            <person name="Holtzapple E.K."/>
            <person name="Khouri H.M."/>
            <person name="Federova N.B."/>
            <person name="Carty H.A."/>
            <person name="Umayam L.A."/>
            <person name="Haft D.H."/>
            <person name="Peterson J.D."/>
            <person name="Beanan M.J."/>
            <person name="White O."/>
            <person name="Salzberg S.L."/>
            <person name="Hsia R.-C."/>
            <person name="McClarty G."/>
            <person name="Rank R.G."/>
            <person name="Bavoil P.M."/>
            <person name="Fraser C.M."/>
        </authorList>
    </citation>
    <scope>NUCLEOTIDE SEQUENCE [LARGE SCALE GENOMIC DNA]</scope>
    <source>
        <strain>ATCC VR-813 / DSM 19441 / 03DC25 / GPIC</strain>
    </source>
</reference>
<proteinExistence type="inferred from homology"/>
<accession>Q824B1</accession>
<name>GRPE_CHLCV</name>
<organism>
    <name type="scientific">Chlamydia caviae (strain ATCC VR-813 / DSM 19441 / 03DC25 / GPIC)</name>
    <name type="common">Chlamydophila caviae</name>
    <dbReference type="NCBI Taxonomy" id="227941"/>
    <lineage>
        <taxon>Bacteria</taxon>
        <taxon>Pseudomonadati</taxon>
        <taxon>Chlamydiota</taxon>
        <taxon>Chlamydiia</taxon>
        <taxon>Chlamydiales</taxon>
        <taxon>Chlamydiaceae</taxon>
        <taxon>Chlamydia/Chlamydophila group</taxon>
        <taxon>Chlamydia</taxon>
    </lineage>
</organism>
<keyword id="KW-0143">Chaperone</keyword>
<keyword id="KW-0963">Cytoplasm</keyword>
<keyword id="KW-0346">Stress response</keyword>
<sequence length="187" mass="21427">MTDSSNEHETENPSLPIPDNEIQDLQQEIATLKAELKEKNDKYLMVLAESENARKRMQKERQEMMQYAVENALIDFLVPIESMEKALGFASQMSDEVKNWALGFNMILQQFKQVFEEKGIVEYSSVGQKFNPFLHEAVETEETTKVPEGTIVEEFSKGYKIGERPIRVAKVKVAKAPAPQEKEEVEK</sequence>
<comment type="function">
    <text evidence="1">Participates actively in the response to hyperosmotic and heat shock by preventing the aggregation of stress-denatured proteins, in association with DnaK and GrpE. It is the nucleotide exchange factor for DnaK and may function as a thermosensor. Unfolded proteins bind initially to DnaJ; upon interaction with the DnaJ-bound protein, DnaK hydrolyzes its bound ATP, resulting in the formation of a stable complex. GrpE releases ADP from DnaK; ATP binding to DnaK triggers the release of the substrate protein, thus completing the reaction cycle. Several rounds of ATP-dependent interactions between DnaJ, DnaK and GrpE are required for fully efficient folding.</text>
</comment>
<comment type="subunit">
    <text evidence="1">Homodimer.</text>
</comment>
<comment type="subcellular location">
    <subcellularLocation>
        <location evidence="1">Cytoplasm</location>
    </subcellularLocation>
</comment>
<comment type="similarity">
    <text evidence="1">Belongs to the GrpE family.</text>
</comment>
<feature type="chain" id="PRO_0000113767" description="Protein GrpE">
    <location>
        <begin position="1"/>
        <end position="187"/>
    </location>
</feature>
<feature type="region of interest" description="Disordered" evidence="2">
    <location>
        <begin position="1"/>
        <end position="21"/>
    </location>
</feature>
<feature type="compositionally biased region" description="Basic and acidic residues" evidence="2">
    <location>
        <begin position="1"/>
        <end position="11"/>
    </location>
</feature>
<dbReference type="EMBL" id="AE015925">
    <property type="protein sequence ID" value="AAP04993.1"/>
    <property type="molecule type" value="Genomic_DNA"/>
</dbReference>
<dbReference type="RefSeq" id="WP_011006211.1">
    <property type="nucleotide sequence ID" value="NC_003361.3"/>
</dbReference>
<dbReference type="SMR" id="Q824B1"/>
<dbReference type="STRING" id="227941.CCA_00242"/>
<dbReference type="KEGG" id="cca:CCA_00242"/>
<dbReference type="eggNOG" id="COG0576">
    <property type="taxonomic scope" value="Bacteria"/>
</dbReference>
<dbReference type="HOGENOM" id="CLU_057217_5_2_0"/>
<dbReference type="OrthoDB" id="9812586at2"/>
<dbReference type="Proteomes" id="UP000002193">
    <property type="component" value="Chromosome"/>
</dbReference>
<dbReference type="GO" id="GO:0005737">
    <property type="term" value="C:cytoplasm"/>
    <property type="evidence" value="ECO:0007669"/>
    <property type="project" value="UniProtKB-SubCell"/>
</dbReference>
<dbReference type="GO" id="GO:0000774">
    <property type="term" value="F:adenyl-nucleotide exchange factor activity"/>
    <property type="evidence" value="ECO:0007669"/>
    <property type="project" value="InterPro"/>
</dbReference>
<dbReference type="GO" id="GO:0042803">
    <property type="term" value="F:protein homodimerization activity"/>
    <property type="evidence" value="ECO:0007669"/>
    <property type="project" value="InterPro"/>
</dbReference>
<dbReference type="GO" id="GO:0051087">
    <property type="term" value="F:protein-folding chaperone binding"/>
    <property type="evidence" value="ECO:0007669"/>
    <property type="project" value="InterPro"/>
</dbReference>
<dbReference type="GO" id="GO:0051082">
    <property type="term" value="F:unfolded protein binding"/>
    <property type="evidence" value="ECO:0007669"/>
    <property type="project" value="TreeGrafter"/>
</dbReference>
<dbReference type="GO" id="GO:0006457">
    <property type="term" value="P:protein folding"/>
    <property type="evidence" value="ECO:0007669"/>
    <property type="project" value="InterPro"/>
</dbReference>
<dbReference type="CDD" id="cd00446">
    <property type="entry name" value="GrpE"/>
    <property type="match status" value="1"/>
</dbReference>
<dbReference type="FunFam" id="2.30.22.10:FF:000001">
    <property type="entry name" value="Protein GrpE"/>
    <property type="match status" value="1"/>
</dbReference>
<dbReference type="Gene3D" id="3.90.20.20">
    <property type="match status" value="1"/>
</dbReference>
<dbReference type="Gene3D" id="2.30.22.10">
    <property type="entry name" value="Head domain of nucleotide exchange factor GrpE"/>
    <property type="match status" value="1"/>
</dbReference>
<dbReference type="HAMAP" id="MF_01151">
    <property type="entry name" value="GrpE"/>
    <property type="match status" value="1"/>
</dbReference>
<dbReference type="InterPro" id="IPR000740">
    <property type="entry name" value="GrpE"/>
</dbReference>
<dbReference type="InterPro" id="IPR013805">
    <property type="entry name" value="GrpE_coiled_coil"/>
</dbReference>
<dbReference type="InterPro" id="IPR009012">
    <property type="entry name" value="GrpE_head"/>
</dbReference>
<dbReference type="PANTHER" id="PTHR21237">
    <property type="entry name" value="GRPE PROTEIN"/>
    <property type="match status" value="1"/>
</dbReference>
<dbReference type="PANTHER" id="PTHR21237:SF23">
    <property type="entry name" value="GRPE PROTEIN HOMOLOG, MITOCHONDRIAL"/>
    <property type="match status" value="1"/>
</dbReference>
<dbReference type="Pfam" id="PF01025">
    <property type="entry name" value="GrpE"/>
    <property type="match status" value="1"/>
</dbReference>
<dbReference type="PRINTS" id="PR00773">
    <property type="entry name" value="GRPEPROTEIN"/>
</dbReference>
<dbReference type="SUPFAM" id="SSF58014">
    <property type="entry name" value="Coiled-coil domain of nucleotide exchange factor GrpE"/>
    <property type="match status" value="1"/>
</dbReference>
<dbReference type="SUPFAM" id="SSF51064">
    <property type="entry name" value="Head domain of nucleotide exchange factor GrpE"/>
    <property type="match status" value="1"/>
</dbReference>
<dbReference type="PROSITE" id="PS01071">
    <property type="entry name" value="GRPE"/>
    <property type="match status" value="1"/>
</dbReference>
<evidence type="ECO:0000255" key="1">
    <source>
        <dbReference type="HAMAP-Rule" id="MF_01151"/>
    </source>
</evidence>
<evidence type="ECO:0000256" key="2">
    <source>
        <dbReference type="SAM" id="MobiDB-lite"/>
    </source>
</evidence>
<protein>
    <recommendedName>
        <fullName evidence="1">Protein GrpE</fullName>
    </recommendedName>
    <alternativeName>
        <fullName evidence="1">HSP-70 cofactor</fullName>
    </alternativeName>
</protein>